<organism>
    <name type="scientific">Mus musculus</name>
    <name type="common">Mouse</name>
    <dbReference type="NCBI Taxonomy" id="10090"/>
    <lineage>
        <taxon>Eukaryota</taxon>
        <taxon>Metazoa</taxon>
        <taxon>Chordata</taxon>
        <taxon>Craniata</taxon>
        <taxon>Vertebrata</taxon>
        <taxon>Euteleostomi</taxon>
        <taxon>Mammalia</taxon>
        <taxon>Eutheria</taxon>
        <taxon>Euarchontoglires</taxon>
        <taxon>Glires</taxon>
        <taxon>Rodentia</taxon>
        <taxon>Myomorpha</taxon>
        <taxon>Muroidea</taxon>
        <taxon>Muridae</taxon>
        <taxon>Murinae</taxon>
        <taxon>Mus</taxon>
        <taxon>Mus</taxon>
    </lineage>
</organism>
<name>PDK1L_MOUSE</name>
<feature type="chain" id="PRO_0000086495" description="Serine/threonine-protein kinase PDIK1L">
    <location>
        <begin position="1"/>
        <end position="341"/>
    </location>
</feature>
<feature type="domain" description="Protein kinase" evidence="2">
    <location>
        <begin position="8"/>
        <end position="334"/>
    </location>
</feature>
<feature type="active site" description="Proton acceptor" evidence="2 3">
    <location>
        <position position="164"/>
    </location>
</feature>
<feature type="binding site" evidence="2">
    <location>
        <begin position="14"/>
        <end position="22"/>
    </location>
    <ligand>
        <name>ATP</name>
        <dbReference type="ChEBI" id="CHEBI:30616"/>
    </ligand>
</feature>
<feature type="binding site" evidence="2">
    <location>
        <position position="37"/>
    </location>
    <ligand>
        <name>ATP</name>
        <dbReference type="ChEBI" id="CHEBI:30616"/>
    </ligand>
</feature>
<feature type="sequence conflict" description="In Ref. 1; BAC35506." evidence="4" ref="1">
    <original>LVETS</original>
    <variation>VCVTA</variation>
    <location>
        <begin position="96"/>
        <end position="100"/>
    </location>
</feature>
<feature type="sequence conflict" description="In Ref. 1; BAE24738." evidence="4" ref="1">
    <original>Q</original>
    <variation>P</variation>
    <location>
        <position position="331"/>
    </location>
</feature>
<dbReference type="EC" id="2.7.11.1"/>
<dbReference type="EMBL" id="AK053750">
    <property type="protein sequence ID" value="BAC35506.1"/>
    <property type="molecule type" value="mRNA"/>
</dbReference>
<dbReference type="EMBL" id="AK139413">
    <property type="protein sequence ID" value="BAE24001.1"/>
    <property type="molecule type" value="mRNA"/>
</dbReference>
<dbReference type="EMBL" id="AK141566">
    <property type="protein sequence ID" value="BAE24738.1"/>
    <property type="molecule type" value="mRNA"/>
</dbReference>
<dbReference type="EMBL" id="AK141823">
    <property type="protein sequence ID" value="BAE24845.1"/>
    <property type="molecule type" value="mRNA"/>
</dbReference>
<dbReference type="EMBL" id="AK157013">
    <property type="protein sequence ID" value="BAE33930.1"/>
    <property type="molecule type" value="mRNA"/>
</dbReference>
<dbReference type="EMBL" id="AK164975">
    <property type="protein sequence ID" value="BAE37986.1"/>
    <property type="molecule type" value="mRNA"/>
</dbReference>
<dbReference type="EMBL" id="AL627314">
    <property type="status" value="NOT_ANNOTATED_CDS"/>
    <property type="molecule type" value="Genomic_DNA"/>
</dbReference>
<dbReference type="EMBL" id="BC027088">
    <property type="protein sequence ID" value="AAH27088.1"/>
    <property type="molecule type" value="mRNA"/>
</dbReference>
<dbReference type="EMBL" id="BC058514">
    <property type="protein sequence ID" value="AAH58514.1"/>
    <property type="molecule type" value="mRNA"/>
</dbReference>
<dbReference type="CCDS" id="CCDS18768.1"/>
<dbReference type="RefSeq" id="NP_001157266.1">
    <property type="nucleotide sequence ID" value="NM_001163794.1"/>
</dbReference>
<dbReference type="RefSeq" id="NP_666268.1">
    <property type="nucleotide sequence ID" value="NM_146156.3"/>
</dbReference>
<dbReference type="SMR" id="Q8QZR7"/>
<dbReference type="FunCoup" id="Q8QZR7">
    <property type="interactions" value="2970"/>
</dbReference>
<dbReference type="STRING" id="10090.ENSMUSP00000060381"/>
<dbReference type="iPTMnet" id="Q8QZR7"/>
<dbReference type="PhosphoSitePlus" id="Q8QZR7"/>
<dbReference type="PaxDb" id="10090-ENSMUSP00000060381"/>
<dbReference type="ProteomicsDB" id="289335"/>
<dbReference type="Antibodypedia" id="30559">
    <property type="antibodies" value="134 antibodies from 23 providers"/>
</dbReference>
<dbReference type="DNASU" id="230809"/>
<dbReference type="Ensembl" id="ENSMUST00000061234.14">
    <property type="protein sequence ID" value="ENSMUSP00000060381.8"/>
    <property type="gene ID" value="ENSMUSG00000050890.16"/>
</dbReference>
<dbReference type="Ensembl" id="ENSMUST00000105876.9">
    <property type="protein sequence ID" value="ENSMUSP00000101502.3"/>
    <property type="gene ID" value="ENSMUSG00000050890.16"/>
</dbReference>
<dbReference type="GeneID" id="230809"/>
<dbReference type="KEGG" id="mmu:230809"/>
<dbReference type="UCSC" id="uc008vep.2">
    <property type="organism name" value="mouse"/>
</dbReference>
<dbReference type="AGR" id="MGI:2385213"/>
<dbReference type="CTD" id="149420"/>
<dbReference type="MGI" id="MGI:2385213">
    <property type="gene designation" value="Pdik1l"/>
</dbReference>
<dbReference type="VEuPathDB" id="HostDB:ENSMUSG00000050890"/>
<dbReference type="eggNOG" id="KOG0595">
    <property type="taxonomic scope" value="Eukaryota"/>
</dbReference>
<dbReference type="GeneTree" id="ENSGT00940000158412"/>
<dbReference type="HOGENOM" id="CLU_026714_0_0_1"/>
<dbReference type="InParanoid" id="Q8QZR7"/>
<dbReference type="OMA" id="MVQKMAH"/>
<dbReference type="OrthoDB" id="6137at9989"/>
<dbReference type="TreeFam" id="TF105336"/>
<dbReference type="BioGRID-ORCS" id="230809">
    <property type="hits" value="3 hits in 79 CRISPR screens"/>
</dbReference>
<dbReference type="ChiTaRS" id="Pdik1l">
    <property type="organism name" value="mouse"/>
</dbReference>
<dbReference type="PRO" id="PR:Q8QZR7"/>
<dbReference type="Proteomes" id="UP000000589">
    <property type="component" value="Chromosome 4"/>
</dbReference>
<dbReference type="RNAct" id="Q8QZR7">
    <property type="molecule type" value="protein"/>
</dbReference>
<dbReference type="Bgee" id="ENSMUSG00000050890">
    <property type="expression patterns" value="Expressed in rostral migratory stream and 248 other cell types or tissues"/>
</dbReference>
<dbReference type="ExpressionAtlas" id="Q8QZR7">
    <property type="expression patterns" value="baseline and differential"/>
</dbReference>
<dbReference type="GO" id="GO:0005654">
    <property type="term" value="C:nucleoplasm"/>
    <property type="evidence" value="ECO:0007669"/>
    <property type="project" value="Ensembl"/>
</dbReference>
<dbReference type="GO" id="GO:0005524">
    <property type="term" value="F:ATP binding"/>
    <property type="evidence" value="ECO:0007669"/>
    <property type="project" value="UniProtKB-KW"/>
</dbReference>
<dbReference type="GO" id="GO:0106310">
    <property type="term" value="F:protein serine kinase activity"/>
    <property type="evidence" value="ECO:0007669"/>
    <property type="project" value="RHEA"/>
</dbReference>
<dbReference type="GO" id="GO:0004674">
    <property type="term" value="F:protein serine/threonine kinase activity"/>
    <property type="evidence" value="ECO:0007669"/>
    <property type="project" value="UniProtKB-KW"/>
</dbReference>
<dbReference type="CDD" id="cd13977">
    <property type="entry name" value="STKc_PDIK1L"/>
    <property type="match status" value="1"/>
</dbReference>
<dbReference type="FunFam" id="1.10.510.10:FF:000174">
    <property type="entry name" value="Serine/threonine-protein kinase PDIK1L"/>
    <property type="match status" value="1"/>
</dbReference>
<dbReference type="FunFam" id="3.30.200.20:FF:000165">
    <property type="entry name" value="Serine/threonine-protein kinase PDIK1L"/>
    <property type="match status" value="1"/>
</dbReference>
<dbReference type="Gene3D" id="3.30.200.20">
    <property type="entry name" value="Phosphorylase Kinase, domain 1"/>
    <property type="match status" value="1"/>
</dbReference>
<dbReference type="Gene3D" id="1.10.510.10">
    <property type="entry name" value="Transferase(Phosphotransferase) domain 1"/>
    <property type="match status" value="1"/>
</dbReference>
<dbReference type="InterPro" id="IPR050339">
    <property type="entry name" value="CC_SR_Kinase"/>
</dbReference>
<dbReference type="InterPro" id="IPR011009">
    <property type="entry name" value="Kinase-like_dom_sf"/>
</dbReference>
<dbReference type="InterPro" id="IPR000719">
    <property type="entry name" value="Prot_kinase_dom"/>
</dbReference>
<dbReference type="InterPro" id="IPR017441">
    <property type="entry name" value="Protein_kinase_ATP_BS"/>
</dbReference>
<dbReference type="InterPro" id="IPR008271">
    <property type="entry name" value="Ser/Thr_kinase_AS"/>
</dbReference>
<dbReference type="PANTHER" id="PTHR11042">
    <property type="entry name" value="EUKARYOTIC TRANSLATION INITIATION FACTOR 2-ALPHA KINASE EIF2-ALPHA KINASE -RELATED"/>
    <property type="match status" value="1"/>
</dbReference>
<dbReference type="PANTHER" id="PTHR11042:SF58">
    <property type="entry name" value="SERINE_THREONINE-PROTEIN KINASE PDIK1L"/>
    <property type="match status" value="1"/>
</dbReference>
<dbReference type="Pfam" id="PF00069">
    <property type="entry name" value="Pkinase"/>
    <property type="match status" value="1"/>
</dbReference>
<dbReference type="PIRSF" id="PIRSF000654">
    <property type="entry name" value="Integrin-linked_kinase"/>
    <property type="match status" value="1"/>
</dbReference>
<dbReference type="SMART" id="SM00220">
    <property type="entry name" value="S_TKc"/>
    <property type="match status" value="1"/>
</dbReference>
<dbReference type="SUPFAM" id="SSF56112">
    <property type="entry name" value="Protein kinase-like (PK-like)"/>
    <property type="match status" value="1"/>
</dbReference>
<dbReference type="PROSITE" id="PS00107">
    <property type="entry name" value="PROTEIN_KINASE_ATP"/>
    <property type="match status" value="1"/>
</dbReference>
<dbReference type="PROSITE" id="PS50011">
    <property type="entry name" value="PROTEIN_KINASE_DOM"/>
    <property type="match status" value="1"/>
</dbReference>
<dbReference type="PROSITE" id="PS00108">
    <property type="entry name" value="PROTEIN_KINASE_ST"/>
    <property type="match status" value="1"/>
</dbReference>
<accession>Q8QZR7</accession>
<accession>A2A9L0</accession>
<accession>Q3URF0</accession>
<accession>Q8BKB3</accession>
<keyword id="KW-0067">ATP-binding</keyword>
<keyword id="KW-0418">Kinase</keyword>
<keyword id="KW-0547">Nucleotide-binding</keyword>
<keyword id="KW-0539">Nucleus</keyword>
<keyword id="KW-1185">Reference proteome</keyword>
<keyword id="KW-0723">Serine/threonine-protein kinase</keyword>
<keyword id="KW-0808">Transferase</keyword>
<reference key="1">
    <citation type="journal article" date="2005" name="Science">
        <title>The transcriptional landscape of the mammalian genome.</title>
        <authorList>
            <person name="Carninci P."/>
            <person name="Kasukawa T."/>
            <person name="Katayama S."/>
            <person name="Gough J."/>
            <person name="Frith M.C."/>
            <person name="Maeda N."/>
            <person name="Oyama R."/>
            <person name="Ravasi T."/>
            <person name="Lenhard B."/>
            <person name="Wells C."/>
            <person name="Kodzius R."/>
            <person name="Shimokawa K."/>
            <person name="Bajic V.B."/>
            <person name="Brenner S.E."/>
            <person name="Batalov S."/>
            <person name="Forrest A.R."/>
            <person name="Zavolan M."/>
            <person name="Davis M.J."/>
            <person name="Wilming L.G."/>
            <person name="Aidinis V."/>
            <person name="Allen J.E."/>
            <person name="Ambesi-Impiombato A."/>
            <person name="Apweiler R."/>
            <person name="Aturaliya R.N."/>
            <person name="Bailey T.L."/>
            <person name="Bansal M."/>
            <person name="Baxter L."/>
            <person name="Beisel K.W."/>
            <person name="Bersano T."/>
            <person name="Bono H."/>
            <person name="Chalk A.M."/>
            <person name="Chiu K.P."/>
            <person name="Choudhary V."/>
            <person name="Christoffels A."/>
            <person name="Clutterbuck D.R."/>
            <person name="Crowe M.L."/>
            <person name="Dalla E."/>
            <person name="Dalrymple B.P."/>
            <person name="de Bono B."/>
            <person name="Della Gatta G."/>
            <person name="di Bernardo D."/>
            <person name="Down T."/>
            <person name="Engstrom P."/>
            <person name="Fagiolini M."/>
            <person name="Faulkner G."/>
            <person name="Fletcher C.F."/>
            <person name="Fukushima T."/>
            <person name="Furuno M."/>
            <person name="Futaki S."/>
            <person name="Gariboldi M."/>
            <person name="Georgii-Hemming P."/>
            <person name="Gingeras T.R."/>
            <person name="Gojobori T."/>
            <person name="Green R.E."/>
            <person name="Gustincich S."/>
            <person name="Harbers M."/>
            <person name="Hayashi Y."/>
            <person name="Hensch T.K."/>
            <person name="Hirokawa N."/>
            <person name="Hill D."/>
            <person name="Huminiecki L."/>
            <person name="Iacono M."/>
            <person name="Ikeo K."/>
            <person name="Iwama A."/>
            <person name="Ishikawa T."/>
            <person name="Jakt M."/>
            <person name="Kanapin A."/>
            <person name="Katoh M."/>
            <person name="Kawasawa Y."/>
            <person name="Kelso J."/>
            <person name="Kitamura H."/>
            <person name="Kitano H."/>
            <person name="Kollias G."/>
            <person name="Krishnan S.P."/>
            <person name="Kruger A."/>
            <person name="Kummerfeld S.K."/>
            <person name="Kurochkin I.V."/>
            <person name="Lareau L.F."/>
            <person name="Lazarevic D."/>
            <person name="Lipovich L."/>
            <person name="Liu J."/>
            <person name="Liuni S."/>
            <person name="McWilliam S."/>
            <person name="Madan Babu M."/>
            <person name="Madera M."/>
            <person name="Marchionni L."/>
            <person name="Matsuda H."/>
            <person name="Matsuzawa S."/>
            <person name="Miki H."/>
            <person name="Mignone F."/>
            <person name="Miyake S."/>
            <person name="Morris K."/>
            <person name="Mottagui-Tabar S."/>
            <person name="Mulder N."/>
            <person name="Nakano N."/>
            <person name="Nakauchi H."/>
            <person name="Ng P."/>
            <person name="Nilsson R."/>
            <person name="Nishiguchi S."/>
            <person name="Nishikawa S."/>
            <person name="Nori F."/>
            <person name="Ohara O."/>
            <person name="Okazaki Y."/>
            <person name="Orlando V."/>
            <person name="Pang K.C."/>
            <person name="Pavan W.J."/>
            <person name="Pavesi G."/>
            <person name="Pesole G."/>
            <person name="Petrovsky N."/>
            <person name="Piazza S."/>
            <person name="Reed J."/>
            <person name="Reid J.F."/>
            <person name="Ring B.Z."/>
            <person name="Ringwald M."/>
            <person name="Rost B."/>
            <person name="Ruan Y."/>
            <person name="Salzberg S.L."/>
            <person name="Sandelin A."/>
            <person name="Schneider C."/>
            <person name="Schoenbach C."/>
            <person name="Sekiguchi K."/>
            <person name="Semple C.A."/>
            <person name="Seno S."/>
            <person name="Sessa L."/>
            <person name="Sheng Y."/>
            <person name="Shibata Y."/>
            <person name="Shimada H."/>
            <person name="Shimada K."/>
            <person name="Silva D."/>
            <person name="Sinclair B."/>
            <person name="Sperling S."/>
            <person name="Stupka E."/>
            <person name="Sugiura K."/>
            <person name="Sultana R."/>
            <person name="Takenaka Y."/>
            <person name="Taki K."/>
            <person name="Tammoja K."/>
            <person name="Tan S.L."/>
            <person name="Tang S."/>
            <person name="Taylor M.S."/>
            <person name="Tegner J."/>
            <person name="Teichmann S.A."/>
            <person name="Ueda H.R."/>
            <person name="van Nimwegen E."/>
            <person name="Verardo R."/>
            <person name="Wei C.L."/>
            <person name="Yagi K."/>
            <person name="Yamanishi H."/>
            <person name="Zabarovsky E."/>
            <person name="Zhu S."/>
            <person name="Zimmer A."/>
            <person name="Hide W."/>
            <person name="Bult C."/>
            <person name="Grimmond S.M."/>
            <person name="Teasdale R.D."/>
            <person name="Liu E.T."/>
            <person name="Brusic V."/>
            <person name="Quackenbush J."/>
            <person name="Wahlestedt C."/>
            <person name="Mattick J.S."/>
            <person name="Hume D.A."/>
            <person name="Kai C."/>
            <person name="Sasaki D."/>
            <person name="Tomaru Y."/>
            <person name="Fukuda S."/>
            <person name="Kanamori-Katayama M."/>
            <person name="Suzuki M."/>
            <person name="Aoki J."/>
            <person name="Arakawa T."/>
            <person name="Iida J."/>
            <person name="Imamura K."/>
            <person name="Itoh M."/>
            <person name="Kato T."/>
            <person name="Kawaji H."/>
            <person name="Kawagashira N."/>
            <person name="Kawashima T."/>
            <person name="Kojima M."/>
            <person name="Kondo S."/>
            <person name="Konno H."/>
            <person name="Nakano K."/>
            <person name="Ninomiya N."/>
            <person name="Nishio T."/>
            <person name="Okada M."/>
            <person name="Plessy C."/>
            <person name="Shibata K."/>
            <person name="Shiraki T."/>
            <person name="Suzuki S."/>
            <person name="Tagami M."/>
            <person name="Waki K."/>
            <person name="Watahiki A."/>
            <person name="Okamura-Oho Y."/>
            <person name="Suzuki H."/>
            <person name="Kawai J."/>
            <person name="Hayashizaki Y."/>
        </authorList>
    </citation>
    <scope>NUCLEOTIDE SEQUENCE [LARGE SCALE MRNA]</scope>
    <source>
        <strain>C57BL/6J</strain>
        <strain>NOD</strain>
        <tissue>Brain cortex</tissue>
        <tissue>Eye</tissue>
        <tissue>Hippocampus</tissue>
        <tissue>Spinal ganglion</tissue>
        <tissue>Spleen</tissue>
    </source>
</reference>
<reference key="2">
    <citation type="journal article" date="2009" name="PLoS Biol.">
        <title>Lineage-specific biology revealed by a finished genome assembly of the mouse.</title>
        <authorList>
            <person name="Church D.M."/>
            <person name="Goodstadt L."/>
            <person name="Hillier L.W."/>
            <person name="Zody M.C."/>
            <person name="Goldstein S."/>
            <person name="She X."/>
            <person name="Bult C.J."/>
            <person name="Agarwala R."/>
            <person name="Cherry J.L."/>
            <person name="DiCuccio M."/>
            <person name="Hlavina W."/>
            <person name="Kapustin Y."/>
            <person name="Meric P."/>
            <person name="Maglott D."/>
            <person name="Birtle Z."/>
            <person name="Marques A.C."/>
            <person name="Graves T."/>
            <person name="Zhou S."/>
            <person name="Teague B."/>
            <person name="Potamousis K."/>
            <person name="Churas C."/>
            <person name="Place M."/>
            <person name="Herschleb J."/>
            <person name="Runnheim R."/>
            <person name="Forrest D."/>
            <person name="Amos-Landgraf J."/>
            <person name="Schwartz D.C."/>
            <person name="Cheng Z."/>
            <person name="Lindblad-Toh K."/>
            <person name="Eichler E.E."/>
            <person name="Ponting C.P."/>
        </authorList>
    </citation>
    <scope>NUCLEOTIDE SEQUENCE [LARGE SCALE GENOMIC DNA]</scope>
    <source>
        <strain>C57BL/6J</strain>
    </source>
</reference>
<reference key="3">
    <citation type="journal article" date="2004" name="Genome Res.">
        <title>The status, quality, and expansion of the NIH full-length cDNA project: the Mammalian Gene Collection (MGC).</title>
        <authorList>
            <consortium name="The MGC Project Team"/>
        </authorList>
    </citation>
    <scope>NUCLEOTIDE SEQUENCE [LARGE SCALE MRNA]</scope>
    <source>
        <strain>C57BL/6J</strain>
        <tissue>Brain</tissue>
        <tissue>Eye</tissue>
    </source>
</reference>
<proteinExistence type="evidence at transcript level"/>
<evidence type="ECO:0000250" key="1"/>
<evidence type="ECO:0000255" key="2">
    <source>
        <dbReference type="PROSITE-ProRule" id="PRU00159"/>
    </source>
</evidence>
<evidence type="ECO:0000255" key="3">
    <source>
        <dbReference type="PROSITE-ProRule" id="PRU10027"/>
    </source>
</evidence>
<evidence type="ECO:0000305" key="4"/>
<sequence>MVSSQPKYDLIREVGRGSYGVVYEAVIRKTSARVAVKKIRCHAPENVELALREFWALSSIKSQHPNVIHLEECILQKDGMVQKMSHGSNSSLYLQLVETSLKGEIAFDPRSAYYLWFVMDFCDGGDMNEYLLSRKPNRKTNTSFMLQLSSALAFLHKNQIIHRDLKPDNILISQSRMDTSDLEPTLKVADFGLSKVCSASGQNPEEPVSVNKCFLSTACGTDFYMAPEVWEGHYTAKADIFALGIIIWAMLERITFIDTETKKELLGSYVKQGTEIVPVGEALLENPKMELLIPVKKKSMNGRMKQLIKEMLAANPQDRPDAFELELRLVQIAFKDSSWET</sequence>
<protein>
    <recommendedName>
        <fullName>Serine/threonine-protein kinase PDIK1L</fullName>
        <ecNumber>2.7.11.1</ecNumber>
    </recommendedName>
    <alternativeName>
        <fullName>PDLIM1-interacting kinase 1-like</fullName>
    </alternativeName>
</protein>
<gene>
    <name type="primary">Pdik1l</name>
</gene>
<comment type="catalytic activity">
    <reaction>
        <text>L-seryl-[protein] + ATP = O-phospho-L-seryl-[protein] + ADP + H(+)</text>
        <dbReference type="Rhea" id="RHEA:17989"/>
        <dbReference type="Rhea" id="RHEA-COMP:9863"/>
        <dbReference type="Rhea" id="RHEA-COMP:11604"/>
        <dbReference type="ChEBI" id="CHEBI:15378"/>
        <dbReference type="ChEBI" id="CHEBI:29999"/>
        <dbReference type="ChEBI" id="CHEBI:30616"/>
        <dbReference type="ChEBI" id="CHEBI:83421"/>
        <dbReference type="ChEBI" id="CHEBI:456216"/>
        <dbReference type="EC" id="2.7.11.1"/>
    </reaction>
</comment>
<comment type="catalytic activity">
    <reaction>
        <text>L-threonyl-[protein] + ATP = O-phospho-L-threonyl-[protein] + ADP + H(+)</text>
        <dbReference type="Rhea" id="RHEA:46608"/>
        <dbReference type="Rhea" id="RHEA-COMP:11060"/>
        <dbReference type="Rhea" id="RHEA-COMP:11605"/>
        <dbReference type="ChEBI" id="CHEBI:15378"/>
        <dbReference type="ChEBI" id="CHEBI:30013"/>
        <dbReference type="ChEBI" id="CHEBI:30616"/>
        <dbReference type="ChEBI" id="CHEBI:61977"/>
        <dbReference type="ChEBI" id="CHEBI:456216"/>
        <dbReference type="EC" id="2.7.11.1"/>
    </reaction>
</comment>
<comment type="subcellular location">
    <subcellularLocation>
        <location evidence="1">Nucleus</location>
    </subcellularLocation>
</comment>
<comment type="similarity">
    <text evidence="2">Belongs to the protein kinase superfamily. Ser/Thr protein kinase family.</text>
</comment>